<sequence>MTIWVDADACPNVIKEILYRAAERMQMPLVLVANQSLRVPPSRFIRTLRVAAGFDVADNEIVRQCEAGDLVITADIPLAAEAIEKGAAALNPRGERYTPATIRERLTMRDFMDTLRASGIQTGGPDSLSQRDRQAFAAELEKWWLEVQRSRG</sequence>
<feature type="chain" id="PRO_1000206454" description="UPF0178 protein YaiI">
    <location>
        <begin position="1"/>
        <end position="152"/>
    </location>
</feature>
<comment type="similarity">
    <text evidence="1">Belongs to the UPF0178 family.</text>
</comment>
<reference key="1">
    <citation type="journal article" date="2009" name="J. Bacteriol.">
        <title>Genomic sequencing reveals regulatory mutations and recombinational events in the widely used MC4100 lineage of Escherichia coli K-12.</title>
        <authorList>
            <person name="Ferenci T."/>
            <person name="Zhou Z."/>
            <person name="Betteridge T."/>
            <person name="Ren Y."/>
            <person name="Liu Y."/>
            <person name="Feng L."/>
            <person name="Reeves P.R."/>
            <person name="Wang L."/>
        </authorList>
    </citation>
    <scope>NUCLEOTIDE SEQUENCE [LARGE SCALE GENOMIC DNA]</scope>
    <source>
        <strain>K12 / MC4100 / BW2952</strain>
    </source>
</reference>
<dbReference type="EMBL" id="CP001396">
    <property type="protein sequence ID" value="ACR62432.1"/>
    <property type="molecule type" value="Genomic_DNA"/>
</dbReference>
<dbReference type="RefSeq" id="WP_000158159.1">
    <property type="nucleotide sequence ID" value="NC_012759.1"/>
</dbReference>
<dbReference type="KEGG" id="ebw:BWG_0271"/>
<dbReference type="HOGENOM" id="CLU_106619_2_1_6"/>
<dbReference type="CDD" id="cd18720">
    <property type="entry name" value="PIN_YqxD-like"/>
    <property type="match status" value="1"/>
</dbReference>
<dbReference type="HAMAP" id="MF_00489">
    <property type="entry name" value="UPF0178"/>
    <property type="match status" value="1"/>
</dbReference>
<dbReference type="InterPro" id="IPR003791">
    <property type="entry name" value="UPF0178"/>
</dbReference>
<dbReference type="NCBIfam" id="NF001095">
    <property type="entry name" value="PRK00124.1"/>
    <property type="match status" value="1"/>
</dbReference>
<dbReference type="PANTHER" id="PTHR35146">
    <property type="entry name" value="UPF0178 PROTEIN YAII"/>
    <property type="match status" value="1"/>
</dbReference>
<dbReference type="PANTHER" id="PTHR35146:SF1">
    <property type="entry name" value="UPF0178 PROTEIN YAII"/>
    <property type="match status" value="1"/>
</dbReference>
<dbReference type="Pfam" id="PF02639">
    <property type="entry name" value="DUF188"/>
    <property type="match status" value="1"/>
</dbReference>
<organism>
    <name type="scientific">Escherichia coli (strain K12 / MC4100 / BW2952)</name>
    <dbReference type="NCBI Taxonomy" id="595496"/>
    <lineage>
        <taxon>Bacteria</taxon>
        <taxon>Pseudomonadati</taxon>
        <taxon>Pseudomonadota</taxon>
        <taxon>Gammaproteobacteria</taxon>
        <taxon>Enterobacterales</taxon>
        <taxon>Enterobacteriaceae</taxon>
        <taxon>Escherichia</taxon>
    </lineage>
</organism>
<evidence type="ECO:0000255" key="1">
    <source>
        <dbReference type="HAMAP-Rule" id="MF_00489"/>
    </source>
</evidence>
<name>YAII_ECOBW</name>
<accession>C4ZTE6</accession>
<protein>
    <recommendedName>
        <fullName evidence="1">UPF0178 protein YaiI</fullName>
    </recommendedName>
</protein>
<gene>
    <name evidence="1" type="primary">yaiI</name>
    <name type="ordered locus">BWG_0271</name>
</gene>
<proteinExistence type="inferred from homology"/>